<accession>P41360</accession>
<dbReference type="EMBL" id="Z31656">
    <property type="protein sequence ID" value="CAA83482.1"/>
    <property type="molecule type" value="Genomic_RNA"/>
</dbReference>
<dbReference type="PIR" id="S47300">
    <property type="entry name" value="S47300"/>
</dbReference>
<dbReference type="SMR" id="P41360"/>
<dbReference type="GlyCosmos" id="P41360">
    <property type="glycosylation" value="3 sites, No reported glycans"/>
</dbReference>
<dbReference type="GO" id="GO:0020002">
    <property type="term" value="C:host cell plasma membrane"/>
    <property type="evidence" value="ECO:0007669"/>
    <property type="project" value="UniProtKB-SubCell"/>
</dbReference>
<dbReference type="GO" id="GO:0016020">
    <property type="term" value="C:membrane"/>
    <property type="evidence" value="ECO:0007669"/>
    <property type="project" value="UniProtKB-KW"/>
</dbReference>
<dbReference type="GO" id="GO:0019031">
    <property type="term" value="C:viral envelope"/>
    <property type="evidence" value="ECO:0007669"/>
    <property type="project" value="UniProtKB-KW"/>
</dbReference>
<dbReference type="GO" id="GO:0055036">
    <property type="term" value="C:virion membrane"/>
    <property type="evidence" value="ECO:0007669"/>
    <property type="project" value="UniProtKB-SubCell"/>
</dbReference>
<dbReference type="GO" id="GO:0019064">
    <property type="term" value="P:fusion of virus membrane with host plasma membrane"/>
    <property type="evidence" value="ECO:0007669"/>
    <property type="project" value="UniProtKB-KW"/>
</dbReference>
<dbReference type="GO" id="GO:0046718">
    <property type="term" value="P:symbiont entry into host cell"/>
    <property type="evidence" value="ECO:0007669"/>
    <property type="project" value="UniProtKB-KW"/>
</dbReference>
<dbReference type="Gene3D" id="1.10.287.2480">
    <property type="match status" value="1"/>
</dbReference>
<dbReference type="Gene3D" id="6.10.10.110">
    <property type="match status" value="1"/>
</dbReference>
<dbReference type="Gene3D" id="2.60.40.1690">
    <property type="entry name" value="Head and neck region of the ectodomain of NDV fusion glycoprotein"/>
    <property type="match status" value="1"/>
</dbReference>
<dbReference type="Gene3D" id="2.40.490.10">
    <property type="entry name" value="Newcastle disease virus like domain"/>
    <property type="match status" value="1"/>
</dbReference>
<dbReference type="InterPro" id="IPR000776">
    <property type="entry name" value="Fusion_F0_Paramyxovir"/>
</dbReference>
<dbReference type="Pfam" id="PF00523">
    <property type="entry name" value="Fusion_gly"/>
    <property type="match status" value="1"/>
</dbReference>
<dbReference type="SUPFAM" id="SSF69922">
    <property type="entry name" value="Head and neck region of the ectodomain of NDV fusion glycoprotein"/>
    <property type="match status" value="1"/>
</dbReference>
<dbReference type="SUPFAM" id="SSF58069">
    <property type="entry name" value="Virus ectodomain"/>
    <property type="match status" value="1"/>
</dbReference>
<keyword id="KW-0165">Cleavage on pair of basic residues</keyword>
<keyword id="KW-0175">Coiled coil</keyword>
<keyword id="KW-1015">Disulfide bond</keyword>
<keyword id="KW-1169">Fusion of virus membrane with host cell membrane</keyword>
<keyword id="KW-1168">Fusion of virus membrane with host membrane</keyword>
<keyword id="KW-0325">Glycoprotein</keyword>
<keyword id="KW-1032">Host cell membrane</keyword>
<keyword id="KW-1043">Host membrane</keyword>
<keyword id="KW-0472">Membrane</keyword>
<keyword id="KW-0732">Signal</keyword>
<keyword id="KW-0812">Transmembrane</keyword>
<keyword id="KW-1133">Transmembrane helix</keyword>
<keyword id="KW-0261">Viral envelope protein</keyword>
<keyword id="KW-1162">Viral penetration into host cytoplasm</keyword>
<keyword id="KW-0946">Virion</keyword>
<keyword id="KW-1160">Virus entry into host cell</keyword>
<protein>
    <recommendedName>
        <fullName>Fusion glycoprotein F0</fullName>
    </recommendedName>
    <component>
        <recommendedName>
            <fullName>Fusion glycoprotein F2</fullName>
        </recommendedName>
    </component>
    <component>
        <recommendedName>
            <fullName>Fusion glycoprotein F1</fullName>
        </recommendedName>
    </component>
</protein>
<proteinExistence type="inferred from homology"/>
<reference key="1">
    <citation type="journal article" date="1994" name="J. Gen. Virol.">
        <title>Nucleotide sequence comparisons of the fusion protein gene from virulent and attenuated strains of rinderpest virus.</title>
        <authorList>
            <person name="Evans S.A."/>
            <person name="Baron M.D."/>
            <person name="Chamberlain R.W."/>
            <person name="Goatley L."/>
            <person name="Barrett T."/>
        </authorList>
    </citation>
    <scope>NUCLEOTIDE SEQUENCE [GENOMIC RNA]</scope>
</reference>
<comment type="function">
    <text evidence="1">Class I viral fusion protein. Under the current model, the protein has at least 3 conformational states: pre-fusion native state, pre-hairpin intermediate state, and post-fusion hairpin state. During viral and plasma cell membrane fusion, the heptad repeat (HR) regions assume a trimer-of-hairpins structure, positioning the fusion peptide in close proximity to the C-terminal region of the ectodomain. The formation of this structure appears to drive apposition and subsequent fusion of viral and plasma cell membranes. Directs fusion of viral and cellular membranes leading to delivery of the nucleocapsid into the cytoplasm. This fusion is pH independent and occurs directly at the outer cell membrane. The trimer of F1-F2 (F protein) probably interacts with HN at the virion surface. Upon HN binding to its cellular receptor, the hydrophobic fusion peptide is unmasked and interacts with the cellular membrane, inducing the fusion between cell and virion membranes. Later in infection, F proteins expressed at the plasma membrane of infected cells could mediate fusion with adjacent cells to form syncytia, a cytopathic effect that could lead to tissue necrosis (By similarity).</text>
</comment>
<comment type="subunit">
    <text evidence="1">Homotrimer of disulfide-linked F1-F2.</text>
</comment>
<comment type="subcellular location">
    <subcellularLocation>
        <location evidence="1">Virion membrane</location>
        <topology evidence="1">Single-pass type I membrane protein</topology>
    </subcellularLocation>
    <subcellularLocation>
        <location evidence="1">Host cell membrane</location>
        <topology evidence="1">Single-pass membrane protein</topology>
    </subcellularLocation>
</comment>
<comment type="PTM">
    <text evidence="1">The inactive precursor F0 is glycosylated and proteolytically cleaved into F1 and F2 to be functionally active. The cleavage is mediated by cellular proteases during the transport and maturation of the polypeptide (By similarity).</text>
</comment>
<comment type="similarity">
    <text evidence="4">Belongs to the paramyxoviruses fusion glycoprotein family.</text>
</comment>
<name>FUS_RINDB</name>
<gene>
    <name type="primary">F</name>
</gene>
<feature type="signal peptide" evidence="3">
    <location>
        <begin position="1"/>
        <end position="19"/>
    </location>
</feature>
<feature type="chain" id="PRO_0000039351" description="Fusion glycoprotein F0">
    <location>
        <begin position="20"/>
        <end position="546"/>
    </location>
</feature>
<feature type="chain" id="PRO_0000039352" description="Fusion glycoprotein F2">
    <location>
        <begin position="20"/>
        <end position="108"/>
    </location>
</feature>
<feature type="chain" id="PRO_0000039353" description="Fusion glycoprotein F1">
    <location>
        <begin position="109"/>
        <end position="546"/>
    </location>
</feature>
<feature type="topological domain" description="Extracellular" evidence="1">
    <location>
        <begin position="20"/>
        <end position="491"/>
    </location>
</feature>
<feature type="transmembrane region" description="Helical" evidence="1">
    <location>
        <begin position="492"/>
        <end position="512"/>
    </location>
</feature>
<feature type="topological domain" description="Cytoplasmic" evidence="1">
    <location>
        <begin position="513"/>
        <end position="546"/>
    </location>
</feature>
<feature type="region of interest" description="Fusion peptide" evidence="1">
    <location>
        <begin position="109"/>
        <end position="133"/>
    </location>
</feature>
<feature type="coiled-coil region" evidence="3">
    <location>
        <begin position="134"/>
        <end position="162"/>
    </location>
</feature>
<feature type="coiled-coil region" evidence="3">
    <location>
        <begin position="458"/>
        <end position="483"/>
    </location>
</feature>
<feature type="site" description="Cleavage; by host" evidence="1">
    <location>
        <begin position="108"/>
        <end position="109"/>
    </location>
</feature>
<feature type="glycosylation site" description="N-linked (GlcNAc...) asparagine; by host" evidence="2">
    <location>
        <position position="25"/>
    </location>
</feature>
<feature type="glycosylation site" description="N-linked (GlcNAc...) asparagine; by host" evidence="2">
    <location>
        <position position="57"/>
    </location>
</feature>
<feature type="glycosylation site" description="N-linked (GlcNAc...) asparagine; by host" evidence="3">
    <location>
        <position position="63"/>
    </location>
</feature>
<feature type="disulfide bond" description="Interchain (with C-195)" evidence="2">
    <location>
        <position position="64"/>
    </location>
</feature>
<feature type="disulfide bond" description="Interchain (with C-68)" evidence="2">
    <location>
        <position position="191"/>
    </location>
</feature>
<feature type="disulfide bond" evidence="2">
    <location>
        <begin position="354"/>
        <end position="362"/>
    </location>
</feature>
<feature type="disulfide bond" evidence="2">
    <location>
        <begin position="386"/>
        <end position="391"/>
    </location>
</feature>
<feature type="disulfide bond" evidence="2">
    <location>
        <begin position="393"/>
        <end position="416"/>
    </location>
</feature>
<sequence>MRIPLAALIAMTIPCLATGQIHWGNLSKIGVVGTSSASYKVVTQSSHQSLVIKLMPNITAIDNCTKTEIGEYKRLLGTVLKPIGEALNAITKNIKPIQSSTTSRRHKRFAGVVLAGAALGVATAAQITAGIALHQSMMNSQAIESLKASLVTTNQAIEEIRQAGQEMILAVQGVQDYINNELVPAMGQLSCDMVGQKLGLKLLRYYTEILSLFGPSLRDPVSAEISIQALSYALGGDINKILNRLGYSGSDLLAILESKGIKAKITYVDIESYFIVLSIAYPSLSEIKGVIVHRLEGVSYNIGSQEWYTTVPRYVATQGYLISNFDDTPCAFTPEGTISSQNALYPMSPLLQECFRGSTRSCARTLVSGSIGNRFILSKGNLIANCASILCKCYTTGSIISQDPDKILTYIAADQCPVVEVNGVTIQVGSREYPDAVYLHNIDLGPPISLEKLDVGTDLGNAVTKLERAKDLLDSSDLILKNIKGVSVTNTGYILIGVGLIAVVGIIIVTCCCKKSSSDSRASTVVLNPGLKPDLTGTSKSYIRSL</sequence>
<evidence type="ECO:0000250" key="1"/>
<evidence type="ECO:0000250" key="2">
    <source>
        <dbReference type="UniProtKB" id="Q786F3"/>
    </source>
</evidence>
<evidence type="ECO:0000255" key="3"/>
<evidence type="ECO:0000305" key="4"/>
<organismHost>
    <name type="scientific">Bos indicus</name>
    <name type="common">Zebu</name>
    <dbReference type="NCBI Taxonomy" id="9915"/>
</organismHost>
<organismHost>
    <name type="scientific">Bos taurus</name>
    <name type="common">Bovine</name>
    <dbReference type="NCBI Taxonomy" id="9913"/>
</organismHost>
<organismHost>
    <name type="scientific">Bubalus bubalis</name>
    <name type="common">Domestic water buffalo</name>
    <dbReference type="NCBI Taxonomy" id="89462"/>
</organismHost>
<organismHost>
    <name type="scientific">Capra hircus</name>
    <name type="common">Goat</name>
    <dbReference type="NCBI Taxonomy" id="9925"/>
</organismHost>
<organismHost>
    <name type="scientific">Gazella</name>
    <name type="common">gazelles</name>
    <dbReference type="NCBI Taxonomy" id="9933"/>
</organismHost>
<organismHost>
    <name type="scientific">Giraffa camelopardalis</name>
    <name type="common">Giraffe</name>
    <dbReference type="NCBI Taxonomy" id="9894"/>
</organismHost>
<organismHost>
    <name type="scientific">Hippopotamus</name>
    <dbReference type="NCBI Taxonomy" id="9832"/>
</organismHost>
<organismHost>
    <name type="scientific">Ovis aries</name>
    <name type="common">Sheep</name>
    <dbReference type="NCBI Taxonomy" id="9940"/>
</organismHost>
<organismHost>
    <name type="scientific">Suidae</name>
    <name type="common">pigs</name>
    <dbReference type="NCBI Taxonomy" id="9821"/>
</organismHost>
<organism>
    <name type="scientific">Rinderpest virus (strain RBT1)</name>
    <name type="common">RDV</name>
    <dbReference type="NCBI Taxonomy" id="39007"/>
    <lineage>
        <taxon>Viruses</taxon>
        <taxon>Riboviria</taxon>
        <taxon>Orthornavirae</taxon>
        <taxon>Negarnaviricota</taxon>
        <taxon>Haploviricotina</taxon>
        <taxon>Monjiviricetes</taxon>
        <taxon>Mononegavirales</taxon>
        <taxon>Paramyxoviridae</taxon>
        <taxon>Orthoparamyxovirinae</taxon>
        <taxon>Morbillivirus</taxon>
        <taxon>Morbillivirus pecoris</taxon>
        <taxon>Rinderpest morbillivirus</taxon>
    </lineage>
</organism>